<comment type="function">
    <text evidence="1">Catalyzes the dehydration of methylthioribulose-1-phosphate (MTRu-1-P) into 2,3-diketo-5-methylthiopentyl-1-phosphate (DK-MTP-1-P).</text>
</comment>
<comment type="catalytic activity">
    <reaction evidence="1">
        <text>5-(methylsulfanyl)-D-ribulose 1-phosphate = 5-methylsulfanyl-2,3-dioxopentyl phosphate + H2O</text>
        <dbReference type="Rhea" id="RHEA:15549"/>
        <dbReference type="ChEBI" id="CHEBI:15377"/>
        <dbReference type="ChEBI" id="CHEBI:58548"/>
        <dbReference type="ChEBI" id="CHEBI:58828"/>
        <dbReference type="EC" id="4.2.1.109"/>
    </reaction>
</comment>
<comment type="cofactor">
    <cofactor evidence="1">
        <name>Zn(2+)</name>
        <dbReference type="ChEBI" id="CHEBI:29105"/>
    </cofactor>
    <text evidence="1">Binds 1 zinc ion per subunit.</text>
</comment>
<comment type="pathway">
    <text evidence="1">Amino-acid biosynthesis; L-methionine biosynthesis via salvage pathway; L-methionine from S-methyl-5-thio-alpha-D-ribose 1-phosphate: step 2/6.</text>
</comment>
<comment type="subunit">
    <text evidence="1">Homotetramer.</text>
</comment>
<comment type="similarity">
    <text evidence="1">Belongs to the aldolase class II family. MtnB subfamily.</text>
</comment>
<evidence type="ECO:0000255" key="1">
    <source>
        <dbReference type="HAMAP-Rule" id="MF_01677"/>
    </source>
</evidence>
<reference key="1">
    <citation type="journal article" date="2004" name="Nucleic Acids Res.">
        <title>Thermoadaptation trait revealed by the genome sequence of thermophilic Geobacillus kaustophilus.</title>
        <authorList>
            <person name="Takami H."/>
            <person name="Takaki Y."/>
            <person name="Chee G.-J."/>
            <person name="Nishi S."/>
            <person name="Shimamura S."/>
            <person name="Suzuki H."/>
            <person name="Matsui S."/>
            <person name="Uchiyama I."/>
        </authorList>
    </citation>
    <scope>NUCLEOTIDE SEQUENCE [LARGE SCALE GENOMIC DNA]</scope>
    <source>
        <strain>HTA426</strain>
    </source>
</reference>
<proteinExistence type="inferred from homology"/>
<gene>
    <name evidence="1" type="primary">mtnB</name>
    <name type="ordered locus">GK0955</name>
</gene>
<sequence length="210" mass="23388">MSIVVKKWKELAEVKAELAARDWFFATSGNLSIKVTDDPLTFLVTASGKDKRKQTDEDFLLVDAAGKPAEETNLKPSAETLLHAEIYGRTNAGCVLHVHTVDNNLISELYAQNGEAVFSGQEIIKAFGIWEENAAVRIPIIDNYADIPTLAREFANYIHGDAGAVLIQNHGITVWGRTAFEAKKHLEAWEFLFRWQVKRLLLQRAGLPVG</sequence>
<protein>
    <recommendedName>
        <fullName evidence="1">Methylthioribulose-1-phosphate dehydratase</fullName>
        <shortName evidence="1">MTRu-1-P dehydratase</shortName>
        <ecNumber evidence="1">4.2.1.109</ecNumber>
    </recommendedName>
</protein>
<name>MTNB_GEOKA</name>
<organism>
    <name type="scientific">Geobacillus kaustophilus (strain HTA426)</name>
    <dbReference type="NCBI Taxonomy" id="235909"/>
    <lineage>
        <taxon>Bacteria</taxon>
        <taxon>Bacillati</taxon>
        <taxon>Bacillota</taxon>
        <taxon>Bacilli</taxon>
        <taxon>Bacillales</taxon>
        <taxon>Anoxybacillaceae</taxon>
        <taxon>Geobacillus</taxon>
        <taxon>Geobacillus thermoleovorans group</taxon>
    </lineage>
</organism>
<dbReference type="EC" id="4.2.1.109" evidence="1"/>
<dbReference type="EMBL" id="BA000043">
    <property type="protein sequence ID" value="BAD75240.1"/>
    <property type="molecule type" value="Genomic_DNA"/>
</dbReference>
<dbReference type="RefSeq" id="WP_011230456.1">
    <property type="nucleotide sequence ID" value="NC_006510.1"/>
</dbReference>
<dbReference type="SMR" id="Q5L1E0"/>
<dbReference type="STRING" id="235909.GK0955"/>
<dbReference type="KEGG" id="gka:GK0955"/>
<dbReference type="PATRIC" id="fig|235909.7.peg.1043"/>
<dbReference type="eggNOG" id="COG0235">
    <property type="taxonomic scope" value="Bacteria"/>
</dbReference>
<dbReference type="HOGENOM" id="CLU_006033_4_1_9"/>
<dbReference type="UniPathway" id="UPA00904">
    <property type="reaction ID" value="UER00875"/>
</dbReference>
<dbReference type="Proteomes" id="UP000001172">
    <property type="component" value="Chromosome"/>
</dbReference>
<dbReference type="GO" id="GO:0005737">
    <property type="term" value="C:cytoplasm"/>
    <property type="evidence" value="ECO:0007669"/>
    <property type="project" value="InterPro"/>
</dbReference>
<dbReference type="GO" id="GO:0046570">
    <property type="term" value="F:methylthioribulose 1-phosphate dehydratase activity"/>
    <property type="evidence" value="ECO:0007669"/>
    <property type="project" value="UniProtKB-UniRule"/>
</dbReference>
<dbReference type="GO" id="GO:0008270">
    <property type="term" value="F:zinc ion binding"/>
    <property type="evidence" value="ECO:0007669"/>
    <property type="project" value="UniProtKB-UniRule"/>
</dbReference>
<dbReference type="GO" id="GO:0019509">
    <property type="term" value="P:L-methionine salvage from methylthioadenosine"/>
    <property type="evidence" value="ECO:0007669"/>
    <property type="project" value="UniProtKB-UniRule"/>
</dbReference>
<dbReference type="Gene3D" id="3.40.225.10">
    <property type="entry name" value="Class II aldolase/adducin N-terminal domain"/>
    <property type="match status" value="1"/>
</dbReference>
<dbReference type="HAMAP" id="MF_01677">
    <property type="entry name" value="Salvage_MtnB"/>
    <property type="match status" value="1"/>
</dbReference>
<dbReference type="InterPro" id="IPR001303">
    <property type="entry name" value="Aldolase_II/adducin_N"/>
</dbReference>
<dbReference type="InterPro" id="IPR036409">
    <property type="entry name" value="Aldolase_II/adducin_N_sf"/>
</dbReference>
<dbReference type="InterPro" id="IPR017714">
    <property type="entry name" value="MethylthioRu-1-P_deHdtase_MtnB"/>
</dbReference>
<dbReference type="NCBIfam" id="NF005244">
    <property type="entry name" value="PRK06754.1"/>
    <property type="match status" value="1"/>
</dbReference>
<dbReference type="NCBIfam" id="TIGR03328">
    <property type="entry name" value="salvage_mtnB"/>
    <property type="match status" value="1"/>
</dbReference>
<dbReference type="PANTHER" id="PTHR10640">
    <property type="entry name" value="METHYLTHIORIBULOSE-1-PHOSPHATE DEHYDRATASE"/>
    <property type="match status" value="1"/>
</dbReference>
<dbReference type="PANTHER" id="PTHR10640:SF7">
    <property type="entry name" value="METHYLTHIORIBULOSE-1-PHOSPHATE DEHYDRATASE"/>
    <property type="match status" value="1"/>
</dbReference>
<dbReference type="Pfam" id="PF00596">
    <property type="entry name" value="Aldolase_II"/>
    <property type="match status" value="1"/>
</dbReference>
<dbReference type="SMART" id="SM01007">
    <property type="entry name" value="Aldolase_II"/>
    <property type="match status" value="1"/>
</dbReference>
<dbReference type="SUPFAM" id="SSF53639">
    <property type="entry name" value="AraD/HMP-PK domain-like"/>
    <property type="match status" value="1"/>
</dbReference>
<keyword id="KW-0028">Amino-acid biosynthesis</keyword>
<keyword id="KW-0456">Lyase</keyword>
<keyword id="KW-0479">Metal-binding</keyword>
<keyword id="KW-0486">Methionine biosynthesis</keyword>
<keyword id="KW-1185">Reference proteome</keyword>
<keyword id="KW-0862">Zinc</keyword>
<accession>Q5L1E0</accession>
<feature type="chain" id="PRO_0000357079" description="Methylthioribulose-1-phosphate dehydratase">
    <location>
        <begin position="1"/>
        <end position="210"/>
    </location>
</feature>
<feature type="binding site" evidence="1">
    <location>
        <position position="97"/>
    </location>
    <ligand>
        <name>Zn(2+)</name>
        <dbReference type="ChEBI" id="CHEBI:29105"/>
    </ligand>
</feature>
<feature type="binding site" evidence="1">
    <location>
        <position position="99"/>
    </location>
    <ligand>
        <name>Zn(2+)</name>
        <dbReference type="ChEBI" id="CHEBI:29105"/>
    </ligand>
</feature>